<protein>
    <recommendedName>
        <fullName evidence="2">Ornithine carbamoyltransferase</fullName>
        <shortName evidence="2">OTCase</shortName>
        <ecNumber evidence="2">2.1.3.3</ecNumber>
    </recommendedName>
</protein>
<reference key="1">
    <citation type="journal article" date="2007" name="Nat. Biotechnol.">
        <title>Complete genome sequence of the myxobacterium Sorangium cellulosum.</title>
        <authorList>
            <person name="Schneiker S."/>
            <person name="Perlova O."/>
            <person name="Kaiser O."/>
            <person name="Gerth K."/>
            <person name="Alici A."/>
            <person name="Altmeyer M.O."/>
            <person name="Bartels D."/>
            <person name="Bekel T."/>
            <person name="Beyer S."/>
            <person name="Bode E."/>
            <person name="Bode H.B."/>
            <person name="Bolten C.J."/>
            <person name="Choudhuri J.V."/>
            <person name="Doss S."/>
            <person name="Elnakady Y.A."/>
            <person name="Frank B."/>
            <person name="Gaigalat L."/>
            <person name="Goesmann A."/>
            <person name="Groeger C."/>
            <person name="Gross F."/>
            <person name="Jelsbak L."/>
            <person name="Jelsbak L."/>
            <person name="Kalinowski J."/>
            <person name="Kegler C."/>
            <person name="Knauber T."/>
            <person name="Konietzny S."/>
            <person name="Kopp M."/>
            <person name="Krause L."/>
            <person name="Krug D."/>
            <person name="Linke B."/>
            <person name="Mahmud T."/>
            <person name="Martinez-Arias R."/>
            <person name="McHardy A.C."/>
            <person name="Merai M."/>
            <person name="Meyer F."/>
            <person name="Mormann S."/>
            <person name="Munoz-Dorado J."/>
            <person name="Perez J."/>
            <person name="Pradella S."/>
            <person name="Rachid S."/>
            <person name="Raddatz G."/>
            <person name="Rosenau F."/>
            <person name="Rueckert C."/>
            <person name="Sasse F."/>
            <person name="Scharfe M."/>
            <person name="Schuster S.C."/>
            <person name="Suen G."/>
            <person name="Treuner-Lange A."/>
            <person name="Velicer G.J."/>
            <person name="Vorholter F.-J."/>
            <person name="Weissman K.J."/>
            <person name="Welch R.D."/>
            <person name="Wenzel S.C."/>
            <person name="Whitworth D.E."/>
            <person name="Wilhelm S."/>
            <person name="Wittmann C."/>
            <person name="Bloecker H."/>
            <person name="Puehler A."/>
            <person name="Mueller R."/>
        </authorList>
    </citation>
    <scope>NUCLEOTIDE SEQUENCE [LARGE SCALE GENOMIC DNA]</scope>
    <source>
        <strain>So ce56</strain>
    </source>
</reference>
<organism>
    <name type="scientific">Sorangium cellulosum (strain So ce56)</name>
    <name type="common">Polyangium cellulosum (strain So ce56)</name>
    <dbReference type="NCBI Taxonomy" id="448385"/>
    <lineage>
        <taxon>Bacteria</taxon>
        <taxon>Pseudomonadati</taxon>
        <taxon>Myxococcota</taxon>
        <taxon>Polyangia</taxon>
        <taxon>Polyangiales</taxon>
        <taxon>Polyangiaceae</taxon>
        <taxon>Sorangium</taxon>
    </lineage>
</organism>
<evidence type="ECO:0000250" key="1"/>
<evidence type="ECO:0000255" key="2">
    <source>
        <dbReference type="HAMAP-Rule" id="MF_01109"/>
    </source>
</evidence>
<accession>A9ERU2</accession>
<comment type="function">
    <text evidence="1">Reversibly catalyzes the transfer of the carbamoyl group from carbamoyl phosphate (CP) to the N(epsilon) atom of ornithine (ORN) to produce L-citrulline.</text>
</comment>
<comment type="catalytic activity">
    <reaction evidence="2">
        <text>carbamoyl phosphate + L-ornithine = L-citrulline + phosphate + H(+)</text>
        <dbReference type="Rhea" id="RHEA:19513"/>
        <dbReference type="ChEBI" id="CHEBI:15378"/>
        <dbReference type="ChEBI" id="CHEBI:43474"/>
        <dbReference type="ChEBI" id="CHEBI:46911"/>
        <dbReference type="ChEBI" id="CHEBI:57743"/>
        <dbReference type="ChEBI" id="CHEBI:58228"/>
        <dbReference type="EC" id="2.1.3.3"/>
    </reaction>
</comment>
<comment type="pathway">
    <text evidence="2">Amino-acid biosynthesis; L-arginine biosynthesis; L-arginine from L-ornithine and carbamoyl phosphate: step 1/3.</text>
</comment>
<comment type="subcellular location">
    <subcellularLocation>
        <location evidence="2">Cytoplasm</location>
    </subcellularLocation>
</comment>
<comment type="similarity">
    <text evidence="2">Belongs to the aspartate/ornithine carbamoyltransferase superfamily. OTCase family.</text>
</comment>
<name>OTC_SORC5</name>
<gene>
    <name evidence="2" type="primary">argF</name>
    <name type="ordered locus">sce7158</name>
</gene>
<proteinExistence type="inferred from homology"/>
<feature type="chain" id="PRO_1000163983" description="Ornithine carbamoyltransferase">
    <location>
        <begin position="1"/>
        <end position="311"/>
    </location>
</feature>
<feature type="binding site" evidence="2">
    <location>
        <begin position="52"/>
        <end position="55"/>
    </location>
    <ligand>
        <name>carbamoyl phosphate</name>
        <dbReference type="ChEBI" id="CHEBI:58228"/>
    </ligand>
</feature>
<feature type="binding site" evidence="2">
    <location>
        <position position="79"/>
    </location>
    <ligand>
        <name>carbamoyl phosphate</name>
        <dbReference type="ChEBI" id="CHEBI:58228"/>
    </ligand>
</feature>
<feature type="binding site" evidence="2">
    <location>
        <position position="103"/>
    </location>
    <ligand>
        <name>carbamoyl phosphate</name>
        <dbReference type="ChEBI" id="CHEBI:58228"/>
    </ligand>
</feature>
<feature type="binding site" evidence="2">
    <location>
        <begin position="129"/>
        <end position="132"/>
    </location>
    <ligand>
        <name>carbamoyl phosphate</name>
        <dbReference type="ChEBI" id="CHEBI:58228"/>
    </ligand>
</feature>
<feature type="binding site" evidence="2">
    <location>
        <position position="167"/>
    </location>
    <ligand>
        <name>L-ornithine</name>
        <dbReference type="ChEBI" id="CHEBI:46911"/>
    </ligand>
</feature>
<feature type="binding site" evidence="2">
    <location>
        <position position="226"/>
    </location>
    <ligand>
        <name>L-ornithine</name>
        <dbReference type="ChEBI" id="CHEBI:46911"/>
    </ligand>
</feature>
<feature type="binding site" evidence="2">
    <location>
        <begin position="230"/>
        <end position="231"/>
    </location>
    <ligand>
        <name>L-ornithine</name>
        <dbReference type="ChEBI" id="CHEBI:46911"/>
    </ligand>
</feature>
<feature type="binding site" evidence="2">
    <location>
        <begin position="266"/>
        <end position="267"/>
    </location>
    <ligand>
        <name>carbamoyl phosphate</name>
        <dbReference type="ChEBI" id="CHEBI:58228"/>
    </ligand>
</feature>
<feature type="binding site" evidence="2">
    <location>
        <position position="294"/>
    </location>
    <ligand>
        <name>carbamoyl phosphate</name>
        <dbReference type="ChEBI" id="CHEBI:58228"/>
    </ligand>
</feature>
<dbReference type="EC" id="2.1.3.3" evidence="2"/>
<dbReference type="EMBL" id="AM746676">
    <property type="protein sequence ID" value="CAN97327.1"/>
    <property type="molecule type" value="Genomic_DNA"/>
</dbReference>
<dbReference type="RefSeq" id="WP_012239766.1">
    <property type="nucleotide sequence ID" value="NC_010162.1"/>
</dbReference>
<dbReference type="SMR" id="A9ERU2"/>
<dbReference type="STRING" id="448385.sce7158"/>
<dbReference type="KEGG" id="scl:sce7158"/>
<dbReference type="eggNOG" id="COG0078">
    <property type="taxonomic scope" value="Bacteria"/>
</dbReference>
<dbReference type="HOGENOM" id="CLU_043846_3_3_7"/>
<dbReference type="OrthoDB" id="9802587at2"/>
<dbReference type="BioCyc" id="SCEL448385:SCE_RS36685-MONOMER"/>
<dbReference type="UniPathway" id="UPA00068">
    <property type="reaction ID" value="UER00112"/>
</dbReference>
<dbReference type="Proteomes" id="UP000002139">
    <property type="component" value="Chromosome"/>
</dbReference>
<dbReference type="GO" id="GO:0005737">
    <property type="term" value="C:cytoplasm"/>
    <property type="evidence" value="ECO:0007669"/>
    <property type="project" value="UniProtKB-SubCell"/>
</dbReference>
<dbReference type="GO" id="GO:0016597">
    <property type="term" value="F:amino acid binding"/>
    <property type="evidence" value="ECO:0007669"/>
    <property type="project" value="InterPro"/>
</dbReference>
<dbReference type="GO" id="GO:0004585">
    <property type="term" value="F:ornithine carbamoyltransferase activity"/>
    <property type="evidence" value="ECO:0007669"/>
    <property type="project" value="UniProtKB-UniRule"/>
</dbReference>
<dbReference type="GO" id="GO:0042450">
    <property type="term" value="P:arginine biosynthetic process via ornithine"/>
    <property type="evidence" value="ECO:0007669"/>
    <property type="project" value="TreeGrafter"/>
</dbReference>
<dbReference type="GO" id="GO:0019240">
    <property type="term" value="P:citrulline biosynthetic process"/>
    <property type="evidence" value="ECO:0007669"/>
    <property type="project" value="TreeGrafter"/>
</dbReference>
<dbReference type="GO" id="GO:0006526">
    <property type="term" value="P:L-arginine biosynthetic process"/>
    <property type="evidence" value="ECO:0007669"/>
    <property type="project" value="UniProtKB-UniRule"/>
</dbReference>
<dbReference type="FunFam" id="3.40.50.1370:FF:000008">
    <property type="entry name" value="Ornithine carbamoyltransferase"/>
    <property type="match status" value="1"/>
</dbReference>
<dbReference type="Gene3D" id="3.40.50.1370">
    <property type="entry name" value="Aspartate/ornithine carbamoyltransferase"/>
    <property type="match status" value="2"/>
</dbReference>
<dbReference type="HAMAP" id="MF_01109">
    <property type="entry name" value="OTCase"/>
    <property type="match status" value="1"/>
</dbReference>
<dbReference type="InterPro" id="IPR006132">
    <property type="entry name" value="Asp/Orn_carbamoyltranf_P-bd"/>
</dbReference>
<dbReference type="InterPro" id="IPR006130">
    <property type="entry name" value="Asp/Orn_carbamoylTrfase"/>
</dbReference>
<dbReference type="InterPro" id="IPR036901">
    <property type="entry name" value="Asp/Orn_carbamoylTrfase_sf"/>
</dbReference>
<dbReference type="InterPro" id="IPR006131">
    <property type="entry name" value="Asp_carbamoyltransf_Asp/Orn-bd"/>
</dbReference>
<dbReference type="InterPro" id="IPR002292">
    <property type="entry name" value="Orn/put_carbamltrans"/>
</dbReference>
<dbReference type="InterPro" id="IPR024904">
    <property type="entry name" value="OTCase_ArgI"/>
</dbReference>
<dbReference type="NCBIfam" id="TIGR00658">
    <property type="entry name" value="orni_carb_tr"/>
    <property type="match status" value="1"/>
</dbReference>
<dbReference type="NCBIfam" id="NF001986">
    <property type="entry name" value="PRK00779.1"/>
    <property type="match status" value="1"/>
</dbReference>
<dbReference type="PANTHER" id="PTHR45753">
    <property type="entry name" value="ORNITHINE CARBAMOYLTRANSFERASE, MITOCHONDRIAL"/>
    <property type="match status" value="1"/>
</dbReference>
<dbReference type="PANTHER" id="PTHR45753:SF3">
    <property type="entry name" value="ORNITHINE TRANSCARBAMYLASE, MITOCHONDRIAL"/>
    <property type="match status" value="1"/>
</dbReference>
<dbReference type="Pfam" id="PF00185">
    <property type="entry name" value="OTCace"/>
    <property type="match status" value="1"/>
</dbReference>
<dbReference type="Pfam" id="PF02729">
    <property type="entry name" value="OTCace_N"/>
    <property type="match status" value="1"/>
</dbReference>
<dbReference type="PRINTS" id="PR00100">
    <property type="entry name" value="AOTCASE"/>
</dbReference>
<dbReference type="PRINTS" id="PR00102">
    <property type="entry name" value="OTCASE"/>
</dbReference>
<dbReference type="SUPFAM" id="SSF53671">
    <property type="entry name" value="Aspartate/ornithine carbamoyltransferase"/>
    <property type="match status" value="1"/>
</dbReference>
<sequence length="311" mass="33869">MAKRDYLKITDTTLAEAHRVLRLAARLKEEPKGRRTTMLAGRAIAVVLEKASTRTRVSFEVGIAQLGAQPVVLSTQGSQLARGEPIRDTARVLARYCDAIAFRTSSTARLLEMAEASVPVINALSDDGHPVQVLSDIFTIQEALAASGDRTGIAGRRVAFLGDCASNMARSWLEAAQLFDFHLVLAGPEGYMPPADEVERARKTGHVTITHDPREGAAGADVVNTDVWASMGHEAEAEKRRAAFAGWTVDAKVMARAAQHSIVLHCLPAHRGEEIDDETLEGPRSRVWDQAENRLHVQKALMLWLLGVELA</sequence>
<keyword id="KW-0028">Amino-acid biosynthesis</keyword>
<keyword id="KW-0055">Arginine biosynthesis</keyword>
<keyword id="KW-0963">Cytoplasm</keyword>
<keyword id="KW-1185">Reference proteome</keyword>
<keyword id="KW-0808">Transferase</keyword>